<accession>Q96WW6</accession>
<accession>O13604</accession>
<accession>Q96WV8</accession>
<reference key="1">
    <citation type="journal article" date="2000" name="Yeast">
        <title>A 38 kb segment containing the cdc2 gene from the left arm of fission yeast chromosome II: sequence analysis and characterization of the genomic DNA and cDNAs encoded on the segment.</title>
        <authorList>
            <person name="Machida M."/>
            <person name="Yamazaki S."/>
            <person name="Kunihiro S."/>
            <person name="Tanaka T."/>
            <person name="Kushida N."/>
            <person name="Jinno K."/>
            <person name="Haikawa Y."/>
            <person name="Yamazaki J."/>
            <person name="Yamamoto S."/>
            <person name="Sekine M."/>
            <person name="Oguchi A."/>
            <person name="Nagai Y."/>
            <person name="Sakai M."/>
            <person name="Aoki K."/>
            <person name="Ogura K."/>
            <person name="Kudoh Y."/>
            <person name="Kikuchi H."/>
            <person name="Zhang M.Q."/>
            <person name="Yanagida M."/>
        </authorList>
    </citation>
    <scope>NUCLEOTIDE SEQUENCE [LARGE SCALE GENOMIC DNA]</scope>
    <source>
        <strain>972 / ATCC 24843</strain>
    </source>
</reference>
<reference key="2">
    <citation type="journal article" date="2002" name="Nature">
        <title>The genome sequence of Schizosaccharomyces pombe.</title>
        <authorList>
            <person name="Wood V."/>
            <person name="Gwilliam R."/>
            <person name="Rajandream M.A."/>
            <person name="Lyne M.H."/>
            <person name="Lyne R."/>
            <person name="Stewart A."/>
            <person name="Sgouros J.G."/>
            <person name="Peat N."/>
            <person name="Hayles J."/>
            <person name="Baker S.G."/>
            <person name="Basham D."/>
            <person name="Bowman S."/>
            <person name="Brooks K."/>
            <person name="Brown D."/>
            <person name="Brown S."/>
            <person name="Chillingworth T."/>
            <person name="Churcher C.M."/>
            <person name="Collins M."/>
            <person name="Connor R."/>
            <person name="Cronin A."/>
            <person name="Davis P."/>
            <person name="Feltwell T."/>
            <person name="Fraser A."/>
            <person name="Gentles S."/>
            <person name="Goble A."/>
            <person name="Hamlin N."/>
            <person name="Harris D.E."/>
            <person name="Hidalgo J."/>
            <person name="Hodgson G."/>
            <person name="Holroyd S."/>
            <person name="Hornsby T."/>
            <person name="Howarth S."/>
            <person name="Huckle E.J."/>
            <person name="Hunt S."/>
            <person name="Jagels K."/>
            <person name="James K.D."/>
            <person name="Jones L."/>
            <person name="Jones M."/>
            <person name="Leather S."/>
            <person name="McDonald S."/>
            <person name="McLean J."/>
            <person name="Mooney P."/>
            <person name="Moule S."/>
            <person name="Mungall K.L."/>
            <person name="Murphy L.D."/>
            <person name="Niblett D."/>
            <person name="Odell C."/>
            <person name="Oliver K."/>
            <person name="O'Neil S."/>
            <person name="Pearson D."/>
            <person name="Quail M.A."/>
            <person name="Rabbinowitsch E."/>
            <person name="Rutherford K.M."/>
            <person name="Rutter S."/>
            <person name="Saunders D."/>
            <person name="Seeger K."/>
            <person name="Sharp S."/>
            <person name="Skelton J."/>
            <person name="Simmonds M.N."/>
            <person name="Squares R."/>
            <person name="Squares S."/>
            <person name="Stevens K."/>
            <person name="Taylor K."/>
            <person name="Taylor R.G."/>
            <person name="Tivey A."/>
            <person name="Walsh S.V."/>
            <person name="Warren T."/>
            <person name="Whitehead S."/>
            <person name="Woodward J.R."/>
            <person name="Volckaert G."/>
            <person name="Aert R."/>
            <person name="Robben J."/>
            <person name="Grymonprez B."/>
            <person name="Weltjens I."/>
            <person name="Vanstreels E."/>
            <person name="Rieger M."/>
            <person name="Schaefer M."/>
            <person name="Mueller-Auer S."/>
            <person name="Gabel C."/>
            <person name="Fuchs M."/>
            <person name="Duesterhoeft A."/>
            <person name="Fritzc C."/>
            <person name="Holzer E."/>
            <person name="Moestl D."/>
            <person name="Hilbert H."/>
            <person name="Borzym K."/>
            <person name="Langer I."/>
            <person name="Beck A."/>
            <person name="Lehrach H."/>
            <person name="Reinhardt R."/>
            <person name="Pohl T.M."/>
            <person name="Eger P."/>
            <person name="Zimmermann W."/>
            <person name="Wedler H."/>
            <person name="Wambutt R."/>
            <person name="Purnelle B."/>
            <person name="Goffeau A."/>
            <person name="Cadieu E."/>
            <person name="Dreano S."/>
            <person name="Gloux S."/>
            <person name="Lelaure V."/>
            <person name="Mottier S."/>
            <person name="Galibert F."/>
            <person name="Aves S.J."/>
            <person name="Xiang Z."/>
            <person name="Hunt C."/>
            <person name="Moore K."/>
            <person name="Hurst S.M."/>
            <person name="Lucas M."/>
            <person name="Rochet M."/>
            <person name="Gaillardin C."/>
            <person name="Tallada V.A."/>
            <person name="Garzon A."/>
            <person name="Thode G."/>
            <person name="Daga R.R."/>
            <person name="Cruzado L."/>
            <person name="Jimenez J."/>
            <person name="Sanchez M."/>
            <person name="del Rey F."/>
            <person name="Benito J."/>
            <person name="Dominguez A."/>
            <person name="Revuelta J.L."/>
            <person name="Moreno S."/>
            <person name="Armstrong J."/>
            <person name="Forsburg S.L."/>
            <person name="Cerutti L."/>
            <person name="Lowe T."/>
            <person name="McCombie W.R."/>
            <person name="Paulsen I."/>
            <person name="Potashkin J."/>
            <person name="Shpakovski G.V."/>
            <person name="Ussery D."/>
            <person name="Barrell B.G."/>
            <person name="Nurse P."/>
        </authorList>
    </citation>
    <scope>NUCLEOTIDE SEQUENCE [LARGE SCALE GENOMIC DNA]</scope>
    <source>
        <strain>972 / ATCC 24843</strain>
    </source>
</reference>
<reference key="3">
    <citation type="journal article" date="2011" name="Science">
        <title>Comparative functional genomics of the fission yeasts.</title>
        <authorList>
            <person name="Rhind N."/>
            <person name="Chen Z."/>
            <person name="Yassour M."/>
            <person name="Thompson D.A."/>
            <person name="Haas B.J."/>
            <person name="Habib N."/>
            <person name="Wapinski I."/>
            <person name="Roy S."/>
            <person name="Lin M.F."/>
            <person name="Heiman D.I."/>
            <person name="Young S.K."/>
            <person name="Furuya K."/>
            <person name="Guo Y."/>
            <person name="Pidoux A."/>
            <person name="Chen H.M."/>
            <person name="Robbertse B."/>
            <person name="Goldberg J.M."/>
            <person name="Aoki K."/>
            <person name="Bayne E.H."/>
            <person name="Berlin A.M."/>
            <person name="Desjardins C.A."/>
            <person name="Dobbs E."/>
            <person name="Dukaj L."/>
            <person name="Fan L."/>
            <person name="FitzGerald M.G."/>
            <person name="French C."/>
            <person name="Gujja S."/>
            <person name="Hansen K."/>
            <person name="Keifenheim D."/>
            <person name="Levin J.Z."/>
            <person name="Mosher R.A."/>
            <person name="Mueller C.A."/>
            <person name="Pfiffner J."/>
            <person name="Priest M."/>
            <person name="Russ C."/>
            <person name="Smialowska A."/>
            <person name="Swoboda P."/>
            <person name="Sykes S.M."/>
            <person name="Vaughn M."/>
            <person name="Vengrova S."/>
            <person name="Yoder R."/>
            <person name="Zeng Q."/>
            <person name="Allshire R."/>
            <person name="Baulcombe D."/>
            <person name="Birren B.W."/>
            <person name="Brown W."/>
            <person name="Ekwall K."/>
            <person name="Kellis M."/>
            <person name="Leatherwood J."/>
            <person name="Levin H."/>
            <person name="Margalit H."/>
            <person name="Martienssen R."/>
            <person name="Nieduszynski C.A."/>
            <person name="Spatafora J.W."/>
            <person name="Friedman N."/>
            <person name="Dalgaard J.Z."/>
            <person name="Baumann P."/>
            <person name="Niki H."/>
            <person name="Regev A."/>
            <person name="Nusbaum C."/>
        </authorList>
    </citation>
    <scope>REVISION OF GENE MODEL</scope>
</reference>
<gene>
    <name type="primary">alg2</name>
    <name type="ORF">pi010</name>
    <name type="ORF">SPBC11B10.01</name>
    <name type="ORF">SPBC32H8.14</name>
</gene>
<comment type="function">
    <text evidence="1">Mannosylates Man(2)GlcNAc(2)-dolichol diphosphate and Man(1)GlcNAc(2)-dolichol diphosphate to form Man(3)GlcNAc(2)-dolichol diphosphate.</text>
</comment>
<comment type="catalytic activity">
    <reaction evidence="1">
        <text>a beta-D-Man-(1-&gt;4)-beta-D-GlcNAc-(1-&gt;4)-alpha-D-GlcNAc-diphospho-di-trans,poly-cis-dolichol + GDP-alpha-D-mannose = an alpha-D-Man-(1-&gt;3)-beta-D-Man-(1-&gt;4)-beta-D-GlcNAc-(1-&gt;4)-alpha-D-GlcNAc-diphospho-di-trans,poly-cis-dolichol + GDP + H(+)</text>
        <dbReference type="Rhea" id="RHEA:29515"/>
        <dbReference type="Rhea" id="RHEA-COMP:19511"/>
        <dbReference type="Rhea" id="RHEA-COMP:19513"/>
        <dbReference type="ChEBI" id="CHEBI:15378"/>
        <dbReference type="ChEBI" id="CHEBI:57527"/>
        <dbReference type="ChEBI" id="CHEBI:58189"/>
        <dbReference type="ChEBI" id="CHEBI:58472"/>
        <dbReference type="ChEBI" id="CHEBI:132510"/>
        <dbReference type="EC" id="2.4.1.132"/>
    </reaction>
    <physiologicalReaction direction="left-to-right" evidence="1">
        <dbReference type="Rhea" id="RHEA:29516"/>
    </physiologicalReaction>
</comment>
<comment type="catalytic activity">
    <reaction evidence="1">
        <text>an alpha-D-Man-(1-&gt;3)-beta-D-Man-(1-&gt;4)-beta-D-GlcNAc-(1-&gt;4)-alpha-D-GlcNAc-diphospho-di-trans,poly-cis-dolichol + GDP-alpha-D-mannose = an alpha-D-Man-(1-&gt;3)-[alpha-D-Man-(1-&gt;6)]-beta-D-Man-(1-&gt;4)-beta-D-GlcNAc-(1-&gt;4)-alpha-D-GlcNAc-diphospho-di-trans,poly-cis-dolichol + GDP + H(+)</text>
        <dbReference type="Rhea" id="RHEA:29519"/>
        <dbReference type="Rhea" id="RHEA-COMP:19513"/>
        <dbReference type="Rhea" id="RHEA-COMP:19515"/>
        <dbReference type="ChEBI" id="CHEBI:15378"/>
        <dbReference type="ChEBI" id="CHEBI:57527"/>
        <dbReference type="ChEBI" id="CHEBI:58189"/>
        <dbReference type="ChEBI" id="CHEBI:132510"/>
        <dbReference type="ChEBI" id="CHEBI:132511"/>
        <dbReference type="EC" id="2.4.1.257"/>
    </reaction>
    <physiologicalReaction direction="left-to-right" evidence="1">
        <dbReference type="Rhea" id="RHEA:29520"/>
    </physiologicalReaction>
</comment>
<comment type="pathway">
    <text evidence="1">Protein modification; protein glycosylation.</text>
</comment>
<comment type="subcellular location">
    <subcellularLocation>
        <location evidence="1">Endoplasmic reticulum membrane</location>
        <topology evidence="2">Multi-pass membrane protein</topology>
    </subcellularLocation>
</comment>
<comment type="similarity">
    <text evidence="3">Belongs to the glycosyltransferase group 1 family. Glycosyltransferase 4 subfamily.</text>
</comment>
<feature type="chain" id="PRO_0000080269" description="Alpha-1,3/1,6-mannosyltransferase alg2">
    <location>
        <begin position="1"/>
        <end position="506"/>
    </location>
</feature>
<feature type="transmembrane region" description="Helical" evidence="2">
    <location>
        <begin position="82"/>
        <end position="104"/>
    </location>
</feature>
<feature type="transmembrane region" description="Helical" evidence="2">
    <location>
        <begin position="118"/>
        <end position="138"/>
    </location>
</feature>
<feature type="transmembrane region" description="Helical" evidence="2">
    <location>
        <begin position="443"/>
        <end position="463"/>
    </location>
</feature>
<feature type="transmembrane region" description="Helical" evidence="2">
    <location>
        <begin position="481"/>
        <end position="501"/>
    </location>
</feature>
<feature type="glycosylation site" description="N-linked (GlcNAc...) asparagine" evidence="2">
    <location>
        <position position="299"/>
    </location>
</feature>
<keyword id="KW-0256">Endoplasmic reticulum</keyword>
<keyword id="KW-0325">Glycoprotein</keyword>
<keyword id="KW-0328">Glycosyltransferase</keyword>
<keyword id="KW-0472">Membrane</keyword>
<keyword id="KW-1185">Reference proteome</keyword>
<keyword id="KW-0808">Transferase</keyword>
<keyword id="KW-0812">Transmembrane</keyword>
<keyword id="KW-1133">Transmembrane helix</keyword>
<sequence>MSQENSVHRSSTKKTPIKIAFIHPDLGIGGAERLVVDAAVGLQSLGKEVVVFTSHCDKKHCFEEIRDGTIKVKVYGDWLPSSIFGRLSIFCSSLRQVYLTMILLTNYMHFDAIIVDQLSTCVPFLLLASQMILFYCHFPDKYLAKRGGILKKLYRIPFDTVEAESVRLADRIVVNSKFTASVFKKAFPKIRKPLRIVHPCVDIEAASKPLEFQLPEKILQRKLLISVNRFERKKDIRLAIDAFSALRDLSANRFPEYLLLVAGGYDIRVSENRRYLKELQEFCEQKDLSYTTVKDNWDNITVAPSTNVLFLLSVPSKVRDALISSSRILLYTPENEHFGIVPLEAMLRKVPVLAQTNGGPLETVIDGKNGWLRPRDAKIWGNVIYEATTSTTYDTAAMGEAGSEWVKNEFSTDAMARKFESEIMSGIRSITPEKRLMRRVNGLLAVFVLFMLFWGTCIIAATVPFAIIKLYFAQTYSSVKLGFMLGTCIVSVSFLTFTVYAKLTNL</sequence>
<proteinExistence type="inferred from homology"/>
<protein>
    <recommendedName>
        <fullName>Alpha-1,3/1,6-mannosyltransferase alg2</fullName>
        <ecNumber evidence="1">2.4.1.132</ecNumber>
        <ecNumber evidence="1">2.4.1.257</ecNumber>
    </recommendedName>
    <alternativeName>
        <fullName>Asparagine-linked glycosylation protein 2</fullName>
    </alternativeName>
    <alternativeName>
        <fullName>GDP-Man:Man(1)GlcNAc(2)-PP-Dol alpha-1,3-mannosyltransferase</fullName>
    </alternativeName>
    <alternativeName>
        <fullName>GDP-Man:Man(1)GlcNAc(2)-PP-dolichol mannosyltransferase</fullName>
    </alternativeName>
    <alternativeName>
        <fullName>GDP-Man:Man(2)GlcNAc(2)-PP-Dol alpha-1,6-mannosyltransferase</fullName>
    </alternativeName>
</protein>
<evidence type="ECO:0000250" key="1">
    <source>
        <dbReference type="UniProtKB" id="P43636"/>
    </source>
</evidence>
<evidence type="ECO:0000255" key="2"/>
<evidence type="ECO:0000305" key="3"/>
<name>ALG2_SCHPO</name>
<organism>
    <name type="scientific">Schizosaccharomyces pombe (strain 972 / ATCC 24843)</name>
    <name type="common">Fission yeast</name>
    <dbReference type="NCBI Taxonomy" id="284812"/>
    <lineage>
        <taxon>Eukaryota</taxon>
        <taxon>Fungi</taxon>
        <taxon>Dikarya</taxon>
        <taxon>Ascomycota</taxon>
        <taxon>Taphrinomycotina</taxon>
        <taxon>Schizosaccharomycetes</taxon>
        <taxon>Schizosaccharomycetales</taxon>
        <taxon>Schizosaccharomycetaceae</taxon>
        <taxon>Schizosaccharomyces</taxon>
    </lineage>
</organism>
<dbReference type="EC" id="2.4.1.132" evidence="1"/>
<dbReference type="EC" id="2.4.1.257" evidence="1"/>
<dbReference type="EMBL" id="AB004534">
    <property type="protein sequence ID" value="BAA21387.2"/>
    <property type="molecule type" value="Genomic_DNA"/>
</dbReference>
<dbReference type="EMBL" id="CU329671">
    <property type="protein sequence ID" value="CAC37504.3"/>
    <property type="molecule type" value="Genomic_DNA"/>
</dbReference>
<dbReference type="RefSeq" id="NP_595621.3">
    <property type="nucleotide sequence ID" value="NM_001021515.2"/>
</dbReference>
<dbReference type="SMR" id="Q96WW6"/>
<dbReference type="BioGRID" id="276402">
    <property type="interactions" value="4"/>
</dbReference>
<dbReference type="FunCoup" id="Q96WW6">
    <property type="interactions" value="487"/>
</dbReference>
<dbReference type="STRING" id="284812.Q96WW6"/>
<dbReference type="CAZy" id="GT4">
    <property type="family name" value="Glycosyltransferase Family 4"/>
</dbReference>
<dbReference type="GlyCosmos" id="Q96WW6">
    <property type="glycosylation" value="1 site, No reported glycans"/>
</dbReference>
<dbReference type="iPTMnet" id="Q96WW6"/>
<dbReference type="PaxDb" id="4896-SPBC11B10.01.1"/>
<dbReference type="EnsemblFungi" id="SPBC11B10.01.1">
    <property type="protein sequence ID" value="SPBC11B10.01.1:pep"/>
    <property type="gene ID" value="SPBC11B10.01"/>
</dbReference>
<dbReference type="GeneID" id="2539854"/>
<dbReference type="KEGG" id="spo:2539854"/>
<dbReference type="PomBase" id="SPBC11B10.01">
    <property type="gene designation" value="alg2"/>
</dbReference>
<dbReference type="VEuPathDB" id="FungiDB:SPBC11B10.01"/>
<dbReference type="eggNOG" id="KOG0853">
    <property type="taxonomic scope" value="Eukaryota"/>
</dbReference>
<dbReference type="HOGENOM" id="CLU_030619_0_0_1"/>
<dbReference type="InParanoid" id="Q96WW6"/>
<dbReference type="OMA" id="AMYMKCP"/>
<dbReference type="Reactome" id="R-SPO-446193">
    <property type="pathway name" value="Biosynthesis of the N-glycan precursor (dolichol lipid-linked oligosaccharide, LLO) and transfer to a nascent protein"/>
</dbReference>
<dbReference type="UniPathway" id="UPA00378"/>
<dbReference type="PRO" id="PR:Q96WW6"/>
<dbReference type="Proteomes" id="UP000002485">
    <property type="component" value="Chromosome II"/>
</dbReference>
<dbReference type="GO" id="GO:0098554">
    <property type="term" value="C:cytoplasmic side of endoplasmic reticulum membrane"/>
    <property type="evidence" value="ECO:0000304"/>
    <property type="project" value="PomBase"/>
</dbReference>
<dbReference type="GO" id="GO:0012505">
    <property type="term" value="C:endomembrane system"/>
    <property type="evidence" value="ECO:0000318"/>
    <property type="project" value="GO_Central"/>
</dbReference>
<dbReference type="GO" id="GO:0000033">
    <property type="term" value="F:alpha-1,3-mannosyltransferase activity"/>
    <property type="evidence" value="ECO:0000318"/>
    <property type="project" value="GO_Central"/>
</dbReference>
<dbReference type="GO" id="GO:0004378">
    <property type="term" value="F:GDP-Man:Man1GlcNAc2-PP-Dol alpha-1,3-mannosyltransferase activity"/>
    <property type="evidence" value="ECO:0000266"/>
    <property type="project" value="PomBase"/>
</dbReference>
<dbReference type="GO" id="GO:0102704">
    <property type="term" value="F:GDP-Man:Man2GlcNAc2-PP-dolichol alpha-1,6-mannosyltransferase activity"/>
    <property type="evidence" value="ECO:0007669"/>
    <property type="project" value="UniProtKB-EC"/>
</dbReference>
<dbReference type="GO" id="GO:0006488">
    <property type="term" value="P:dolichol-linked oligosaccharide biosynthetic process"/>
    <property type="evidence" value="ECO:0000318"/>
    <property type="project" value="GO_Central"/>
</dbReference>
<dbReference type="CDD" id="cd03805">
    <property type="entry name" value="GT4_ALG2-like"/>
    <property type="match status" value="1"/>
</dbReference>
<dbReference type="FunFam" id="3.40.50.2000:FF:000437">
    <property type="entry name" value="Alpha-1,3/1,6-mannosyltransferase alg2"/>
    <property type="match status" value="1"/>
</dbReference>
<dbReference type="Gene3D" id="3.40.50.2000">
    <property type="entry name" value="Glycogen Phosphorylase B"/>
    <property type="match status" value="2"/>
</dbReference>
<dbReference type="InterPro" id="IPR027054">
    <property type="entry name" value="ALG2"/>
</dbReference>
<dbReference type="InterPro" id="IPR001296">
    <property type="entry name" value="Glyco_trans_1"/>
</dbReference>
<dbReference type="InterPro" id="IPR028098">
    <property type="entry name" value="Glyco_trans_4-like_N"/>
</dbReference>
<dbReference type="PANTHER" id="PTHR45918">
    <property type="entry name" value="ALPHA-1,3/1,6-MANNOSYLTRANSFERASE ALG2"/>
    <property type="match status" value="1"/>
</dbReference>
<dbReference type="PANTHER" id="PTHR45918:SF1">
    <property type="entry name" value="ALPHA-1,3_1,6-MANNOSYLTRANSFERASE ALG2"/>
    <property type="match status" value="1"/>
</dbReference>
<dbReference type="Pfam" id="PF13439">
    <property type="entry name" value="Glyco_transf_4"/>
    <property type="match status" value="1"/>
</dbReference>
<dbReference type="Pfam" id="PF00534">
    <property type="entry name" value="Glycos_transf_1"/>
    <property type="match status" value="1"/>
</dbReference>
<dbReference type="SUPFAM" id="SSF53756">
    <property type="entry name" value="UDP-Glycosyltransferase/glycogen phosphorylase"/>
    <property type="match status" value="1"/>
</dbReference>